<feature type="chain" id="PRO_0000303533" description="tRNA N6-adenosine threonylcarbamoyltransferase">
    <location>
        <begin position="1"/>
        <end position="337"/>
    </location>
</feature>
<feature type="binding site" evidence="1">
    <location>
        <position position="111"/>
    </location>
    <ligand>
        <name>Fe cation</name>
        <dbReference type="ChEBI" id="CHEBI:24875"/>
    </ligand>
</feature>
<feature type="binding site" evidence="1">
    <location>
        <position position="115"/>
    </location>
    <ligand>
        <name>Fe cation</name>
        <dbReference type="ChEBI" id="CHEBI:24875"/>
    </ligand>
</feature>
<feature type="binding site" evidence="1">
    <location>
        <begin position="134"/>
        <end position="138"/>
    </location>
    <ligand>
        <name>substrate</name>
    </ligand>
</feature>
<feature type="binding site" evidence="1">
    <location>
        <position position="167"/>
    </location>
    <ligand>
        <name>substrate</name>
    </ligand>
</feature>
<feature type="binding site" evidence="1">
    <location>
        <position position="180"/>
    </location>
    <ligand>
        <name>substrate</name>
    </ligand>
</feature>
<feature type="binding site" evidence="1">
    <location>
        <position position="272"/>
    </location>
    <ligand>
        <name>substrate</name>
    </ligand>
</feature>
<feature type="binding site" evidence="1">
    <location>
        <position position="300"/>
    </location>
    <ligand>
        <name>Fe cation</name>
        <dbReference type="ChEBI" id="CHEBI:24875"/>
    </ligand>
</feature>
<sequence length="337" mass="36319">MRVLGIETSCDETGIAVYDDEKGLLSHALYSQVKLHADYGGVVPELASRDHVRKIIPLIRQALKEANCTQDDIDAIAYTKGPGLVGALLVGACVGRSLAFAWGKPAVGVHHMEGHLLAPMLEEDVPEFPFLALLVSGGHSMMVAVEGIGRYQVLGESVDDAAGEAFDKTAKLMGLDYPGGPRLAKLAAQGEPNCYRFPRPMTDRPGLDFSFSGLKTFAANTIADEPDDEQTRANIARAFEEAVVDTLAIKCKRALKQTGYNRLVIAGGVSANSRLRESLAEMMQGLGGRVYYPRGEFCTDNGAMIAYAGMQRLKADQLEPLAVKGMPRWPLDSLPPV</sequence>
<comment type="function">
    <text evidence="1">Required for the formation of a threonylcarbamoyl group on adenosine at position 37 (t(6)A37) in tRNAs that read codons beginning with adenine. Is involved in the transfer of the threonylcarbamoyl moiety of threonylcarbamoyl-AMP (TC-AMP) to the N6 group of A37, together with TsaE and TsaB. TsaD likely plays a direct catalytic role in this reaction.</text>
</comment>
<comment type="catalytic activity">
    <reaction evidence="1">
        <text>L-threonylcarbamoyladenylate + adenosine(37) in tRNA = N(6)-L-threonylcarbamoyladenosine(37) in tRNA + AMP + H(+)</text>
        <dbReference type="Rhea" id="RHEA:37059"/>
        <dbReference type="Rhea" id="RHEA-COMP:10162"/>
        <dbReference type="Rhea" id="RHEA-COMP:10163"/>
        <dbReference type="ChEBI" id="CHEBI:15378"/>
        <dbReference type="ChEBI" id="CHEBI:73682"/>
        <dbReference type="ChEBI" id="CHEBI:74411"/>
        <dbReference type="ChEBI" id="CHEBI:74418"/>
        <dbReference type="ChEBI" id="CHEBI:456215"/>
        <dbReference type="EC" id="2.3.1.234"/>
    </reaction>
</comment>
<comment type="cofactor">
    <cofactor evidence="1">
        <name>Fe(2+)</name>
        <dbReference type="ChEBI" id="CHEBI:29033"/>
    </cofactor>
    <text evidence="1">Binds 1 Fe(2+) ion per subunit.</text>
</comment>
<comment type="subcellular location">
    <subcellularLocation>
        <location evidence="1">Cytoplasm</location>
    </subcellularLocation>
</comment>
<comment type="similarity">
    <text evidence="1">Belongs to the KAE1 / TsaD family.</text>
</comment>
<name>TSAD_SHELP</name>
<dbReference type="EC" id="2.3.1.234" evidence="1"/>
<dbReference type="EMBL" id="CP000606">
    <property type="protein sequence ID" value="ABO22871.1"/>
    <property type="molecule type" value="Genomic_DNA"/>
</dbReference>
<dbReference type="RefSeq" id="WP_011864804.1">
    <property type="nucleotide sequence ID" value="NC_009092.1"/>
</dbReference>
<dbReference type="SMR" id="A3QBM3"/>
<dbReference type="STRING" id="323850.Shew_1000"/>
<dbReference type="KEGG" id="slo:Shew_1000"/>
<dbReference type="eggNOG" id="COG0533">
    <property type="taxonomic scope" value="Bacteria"/>
</dbReference>
<dbReference type="HOGENOM" id="CLU_023208_0_0_6"/>
<dbReference type="OrthoDB" id="9806197at2"/>
<dbReference type="Proteomes" id="UP000001558">
    <property type="component" value="Chromosome"/>
</dbReference>
<dbReference type="GO" id="GO:0005737">
    <property type="term" value="C:cytoplasm"/>
    <property type="evidence" value="ECO:0007669"/>
    <property type="project" value="UniProtKB-SubCell"/>
</dbReference>
<dbReference type="GO" id="GO:0005506">
    <property type="term" value="F:iron ion binding"/>
    <property type="evidence" value="ECO:0007669"/>
    <property type="project" value="UniProtKB-UniRule"/>
</dbReference>
<dbReference type="GO" id="GO:0061711">
    <property type="term" value="F:N(6)-L-threonylcarbamoyladenine synthase activity"/>
    <property type="evidence" value="ECO:0007669"/>
    <property type="project" value="UniProtKB-EC"/>
</dbReference>
<dbReference type="GO" id="GO:0002949">
    <property type="term" value="P:tRNA threonylcarbamoyladenosine modification"/>
    <property type="evidence" value="ECO:0007669"/>
    <property type="project" value="UniProtKB-UniRule"/>
</dbReference>
<dbReference type="CDD" id="cd24133">
    <property type="entry name" value="ASKHA_NBD_TsaD_bac"/>
    <property type="match status" value="1"/>
</dbReference>
<dbReference type="FunFam" id="3.30.420.40:FF:000031">
    <property type="entry name" value="tRNA N6-adenosine threonylcarbamoyltransferase"/>
    <property type="match status" value="1"/>
</dbReference>
<dbReference type="Gene3D" id="3.30.420.40">
    <property type="match status" value="2"/>
</dbReference>
<dbReference type="HAMAP" id="MF_01445">
    <property type="entry name" value="TsaD"/>
    <property type="match status" value="1"/>
</dbReference>
<dbReference type="InterPro" id="IPR043129">
    <property type="entry name" value="ATPase_NBD"/>
</dbReference>
<dbReference type="InterPro" id="IPR000905">
    <property type="entry name" value="Gcp-like_dom"/>
</dbReference>
<dbReference type="InterPro" id="IPR017861">
    <property type="entry name" value="KAE1/TsaD"/>
</dbReference>
<dbReference type="InterPro" id="IPR017860">
    <property type="entry name" value="Peptidase_M22_CS"/>
</dbReference>
<dbReference type="InterPro" id="IPR022450">
    <property type="entry name" value="TsaD"/>
</dbReference>
<dbReference type="NCBIfam" id="TIGR00329">
    <property type="entry name" value="gcp_kae1"/>
    <property type="match status" value="1"/>
</dbReference>
<dbReference type="NCBIfam" id="TIGR03723">
    <property type="entry name" value="T6A_TsaD_YgjD"/>
    <property type="match status" value="1"/>
</dbReference>
<dbReference type="PANTHER" id="PTHR11735">
    <property type="entry name" value="TRNA N6-ADENOSINE THREONYLCARBAMOYLTRANSFERASE"/>
    <property type="match status" value="1"/>
</dbReference>
<dbReference type="PANTHER" id="PTHR11735:SF6">
    <property type="entry name" value="TRNA N6-ADENOSINE THREONYLCARBAMOYLTRANSFERASE, MITOCHONDRIAL"/>
    <property type="match status" value="1"/>
</dbReference>
<dbReference type="Pfam" id="PF00814">
    <property type="entry name" value="TsaD"/>
    <property type="match status" value="1"/>
</dbReference>
<dbReference type="PRINTS" id="PR00789">
    <property type="entry name" value="OSIALOPTASE"/>
</dbReference>
<dbReference type="SUPFAM" id="SSF53067">
    <property type="entry name" value="Actin-like ATPase domain"/>
    <property type="match status" value="1"/>
</dbReference>
<dbReference type="PROSITE" id="PS01016">
    <property type="entry name" value="GLYCOPROTEASE"/>
    <property type="match status" value="1"/>
</dbReference>
<accession>A3QBM3</accession>
<organism>
    <name type="scientific">Shewanella loihica (strain ATCC BAA-1088 / PV-4)</name>
    <dbReference type="NCBI Taxonomy" id="323850"/>
    <lineage>
        <taxon>Bacteria</taxon>
        <taxon>Pseudomonadati</taxon>
        <taxon>Pseudomonadota</taxon>
        <taxon>Gammaproteobacteria</taxon>
        <taxon>Alteromonadales</taxon>
        <taxon>Shewanellaceae</taxon>
        <taxon>Shewanella</taxon>
    </lineage>
</organism>
<reference key="1">
    <citation type="submission" date="2007-03" db="EMBL/GenBank/DDBJ databases">
        <title>Complete sequence of Shewanella loihica PV-4.</title>
        <authorList>
            <consortium name="US DOE Joint Genome Institute"/>
            <person name="Copeland A."/>
            <person name="Lucas S."/>
            <person name="Lapidus A."/>
            <person name="Barry K."/>
            <person name="Detter J.C."/>
            <person name="Glavina del Rio T."/>
            <person name="Hammon N."/>
            <person name="Israni S."/>
            <person name="Dalin E."/>
            <person name="Tice H."/>
            <person name="Pitluck S."/>
            <person name="Chain P."/>
            <person name="Malfatti S."/>
            <person name="Shin M."/>
            <person name="Vergez L."/>
            <person name="Schmutz J."/>
            <person name="Larimer F."/>
            <person name="Land M."/>
            <person name="Hauser L."/>
            <person name="Kyrpides N."/>
            <person name="Mikhailova N."/>
            <person name="Romine M.F."/>
            <person name="Serres G."/>
            <person name="Fredrickson J."/>
            <person name="Tiedje J."/>
            <person name="Richardson P."/>
        </authorList>
    </citation>
    <scope>NUCLEOTIDE SEQUENCE [LARGE SCALE GENOMIC DNA]</scope>
    <source>
        <strain>ATCC BAA-1088 / PV-4</strain>
    </source>
</reference>
<evidence type="ECO:0000255" key="1">
    <source>
        <dbReference type="HAMAP-Rule" id="MF_01445"/>
    </source>
</evidence>
<keyword id="KW-0012">Acyltransferase</keyword>
<keyword id="KW-0963">Cytoplasm</keyword>
<keyword id="KW-0408">Iron</keyword>
<keyword id="KW-0479">Metal-binding</keyword>
<keyword id="KW-1185">Reference proteome</keyword>
<keyword id="KW-0808">Transferase</keyword>
<keyword id="KW-0819">tRNA processing</keyword>
<proteinExistence type="inferred from homology"/>
<protein>
    <recommendedName>
        <fullName evidence="1">tRNA N6-adenosine threonylcarbamoyltransferase</fullName>
        <ecNumber evidence="1">2.3.1.234</ecNumber>
    </recommendedName>
    <alternativeName>
        <fullName evidence="1">N6-L-threonylcarbamoyladenine synthase</fullName>
        <shortName evidence="1">t(6)A synthase</shortName>
    </alternativeName>
    <alternativeName>
        <fullName evidence="1">t(6)A37 threonylcarbamoyladenosine biosynthesis protein TsaD</fullName>
    </alternativeName>
    <alternativeName>
        <fullName evidence="1">tRNA threonylcarbamoyladenosine biosynthesis protein TsaD</fullName>
    </alternativeName>
</protein>
<gene>
    <name evidence="1" type="primary">tsaD</name>
    <name type="synonym">gcp</name>
    <name type="ordered locus">Shew_1000</name>
</gene>